<protein>
    <recommendedName>
        <fullName evidence="7">Nucleoside diphosphate kinase 1</fullName>
        <ecNumber evidence="5 6">2.7.4.6</ecNumber>
    </recommendedName>
    <alternativeName>
        <fullName evidence="8">Nucleoside diphosphate kinase I</fullName>
        <shortName evidence="8">NDK I</shortName>
        <shortName evidence="8">NDP kinase I</shortName>
        <shortName evidence="8">NDPK I</shortName>
    </alternativeName>
    <alternativeName>
        <fullName evidence="7">ZmNDPK1</fullName>
    </alternativeName>
</protein>
<name>NDK1_MAIZE</name>
<keyword id="KW-0002">3D-structure</keyword>
<keyword id="KW-0067">ATP-binding</keyword>
<keyword id="KW-0238">DNA-binding</keyword>
<keyword id="KW-0418">Kinase</keyword>
<keyword id="KW-0547">Nucleotide-binding</keyword>
<keyword id="KW-0539">Nucleus</keyword>
<keyword id="KW-1185">Reference proteome</keyword>
<keyword id="KW-0804">Transcription</keyword>
<keyword id="KW-0805">Transcription regulation</keyword>
<keyword id="KW-0808">Transferase</keyword>
<organism>
    <name type="scientific">Zea mays</name>
    <name type="common">Maize</name>
    <dbReference type="NCBI Taxonomy" id="4577"/>
    <lineage>
        <taxon>Eukaryota</taxon>
        <taxon>Viridiplantae</taxon>
        <taxon>Streptophyta</taxon>
        <taxon>Embryophyta</taxon>
        <taxon>Tracheophyta</taxon>
        <taxon>Spermatophyta</taxon>
        <taxon>Magnoliopsida</taxon>
        <taxon>Liliopsida</taxon>
        <taxon>Poales</taxon>
        <taxon>Poaceae</taxon>
        <taxon>PACMAD clade</taxon>
        <taxon>Panicoideae</taxon>
        <taxon>Andropogonodae</taxon>
        <taxon>Andropogoneae</taxon>
        <taxon>Tripsacinae</taxon>
        <taxon>Zea</taxon>
    </lineage>
</organism>
<dbReference type="EC" id="2.7.4.6" evidence="5 6"/>
<dbReference type="EMBL" id="KM347972">
    <property type="protein sequence ID" value="AIL33795.1"/>
    <property type="molecule type" value="mRNA"/>
</dbReference>
<dbReference type="EMBL" id="CM007647">
    <property type="protein sequence ID" value="ONL99892.1"/>
    <property type="molecule type" value="Genomic_DNA"/>
</dbReference>
<dbReference type="EMBL" id="EU954075">
    <property type="protein sequence ID" value="ACG26193.1"/>
    <property type="molecule type" value="mRNA"/>
</dbReference>
<dbReference type="EMBL" id="EU954306">
    <property type="protein sequence ID" value="ACG26424.1"/>
    <property type="molecule type" value="mRNA"/>
</dbReference>
<dbReference type="EMBL" id="EU957798">
    <property type="protein sequence ID" value="ACG29916.1"/>
    <property type="molecule type" value="mRNA"/>
</dbReference>
<dbReference type="EMBL" id="EU961140">
    <property type="protein sequence ID" value="ACG33258.1"/>
    <property type="molecule type" value="mRNA"/>
</dbReference>
<dbReference type="EMBL" id="BT037487">
    <property type="protein sequence ID" value="ACF82492.1"/>
    <property type="molecule type" value="mRNA"/>
</dbReference>
<dbReference type="EMBL" id="BT061314">
    <property type="protein sequence ID" value="ACN26011.1"/>
    <property type="molecule type" value="mRNA"/>
</dbReference>
<dbReference type="RefSeq" id="NP_001296954.1">
    <property type="nucleotide sequence ID" value="NM_001310025.1"/>
</dbReference>
<dbReference type="PDB" id="1VYA">
    <property type="method" value="X-ray"/>
    <property type="resolution" value="2.05 A"/>
    <property type="chains" value="A/B/C/D/E/F/G/H/I/J/K/L=1-149"/>
</dbReference>
<dbReference type="PDBsum" id="1VYA"/>
<dbReference type="SMR" id="B4FK49"/>
<dbReference type="FunCoup" id="B4FK49">
    <property type="interactions" value="1838"/>
</dbReference>
<dbReference type="IntAct" id="B4FK49">
    <property type="interactions" value="35"/>
</dbReference>
<dbReference type="STRING" id="4577.B4FK49"/>
<dbReference type="EnsemblPlants" id="Zm00001eb023820_T002">
    <property type="protein sequence ID" value="Zm00001eb023820_P002"/>
    <property type="gene ID" value="Zm00001eb023820"/>
</dbReference>
<dbReference type="GeneID" id="100217209"/>
<dbReference type="Gramene" id="Zm00001eb023820_T002">
    <property type="protein sequence ID" value="Zm00001eb023820_P002"/>
    <property type="gene ID" value="Zm00001eb023820"/>
</dbReference>
<dbReference type="KEGG" id="zma:100217209"/>
<dbReference type="HOGENOM" id="CLU_060216_6_3_1"/>
<dbReference type="InParanoid" id="B4FK49"/>
<dbReference type="OMA" id="QHYGEHK"/>
<dbReference type="OrthoDB" id="2162449at2759"/>
<dbReference type="EvolutionaryTrace" id="B4FK49"/>
<dbReference type="Proteomes" id="UP000007305">
    <property type="component" value="Chromosome 1"/>
</dbReference>
<dbReference type="ExpressionAtlas" id="B4FK49">
    <property type="expression patterns" value="baseline and differential"/>
</dbReference>
<dbReference type="GO" id="GO:0005634">
    <property type="term" value="C:nucleus"/>
    <property type="evidence" value="ECO:0007669"/>
    <property type="project" value="UniProtKB-SubCell"/>
</dbReference>
<dbReference type="GO" id="GO:0005524">
    <property type="term" value="F:ATP binding"/>
    <property type="evidence" value="ECO:0007669"/>
    <property type="project" value="UniProtKB-KW"/>
</dbReference>
<dbReference type="GO" id="GO:0003677">
    <property type="term" value="F:DNA binding"/>
    <property type="evidence" value="ECO:0007669"/>
    <property type="project" value="UniProtKB-KW"/>
</dbReference>
<dbReference type="GO" id="GO:0004550">
    <property type="term" value="F:nucleoside diphosphate kinase activity"/>
    <property type="evidence" value="ECO:0000314"/>
    <property type="project" value="UniProtKB"/>
</dbReference>
<dbReference type="GO" id="GO:0006241">
    <property type="term" value="P:CTP biosynthetic process"/>
    <property type="evidence" value="ECO:0007669"/>
    <property type="project" value="InterPro"/>
</dbReference>
<dbReference type="GO" id="GO:0006183">
    <property type="term" value="P:GTP biosynthetic process"/>
    <property type="evidence" value="ECO:0007669"/>
    <property type="project" value="InterPro"/>
</dbReference>
<dbReference type="GO" id="GO:0009142">
    <property type="term" value="P:nucleoside triphosphate biosynthetic process"/>
    <property type="evidence" value="ECO:0000314"/>
    <property type="project" value="UniProtKB"/>
</dbReference>
<dbReference type="GO" id="GO:0034214">
    <property type="term" value="P:protein hexamerization"/>
    <property type="evidence" value="ECO:0000314"/>
    <property type="project" value="UniProtKB"/>
</dbReference>
<dbReference type="GO" id="GO:0006228">
    <property type="term" value="P:UTP biosynthetic process"/>
    <property type="evidence" value="ECO:0007669"/>
    <property type="project" value="InterPro"/>
</dbReference>
<dbReference type="CDD" id="cd04413">
    <property type="entry name" value="NDPk_I"/>
    <property type="match status" value="1"/>
</dbReference>
<dbReference type="FunFam" id="3.30.70.141:FF:000002">
    <property type="entry name" value="Nucleoside diphosphate kinase"/>
    <property type="match status" value="1"/>
</dbReference>
<dbReference type="Gene3D" id="3.30.70.141">
    <property type="entry name" value="Nucleoside diphosphate kinase-like domain"/>
    <property type="match status" value="1"/>
</dbReference>
<dbReference type="HAMAP" id="MF_00451">
    <property type="entry name" value="NDP_kinase"/>
    <property type="match status" value="1"/>
</dbReference>
<dbReference type="InterPro" id="IPR034907">
    <property type="entry name" value="NDK-like_dom"/>
</dbReference>
<dbReference type="InterPro" id="IPR036850">
    <property type="entry name" value="NDK-like_dom_sf"/>
</dbReference>
<dbReference type="InterPro" id="IPR001564">
    <property type="entry name" value="Nucleoside_diP_kinase"/>
</dbReference>
<dbReference type="InterPro" id="IPR023005">
    <property type="entry name" value="Nucleoside_diP_kinase_AS"/>
</dbReference>
<dbReference type="NCBIfam" id="NF001908">
    <property type="entry name" value="PRK00668.1"/>
    <property type="match status" value="1"/>
</dbReference>
<dbReference type="PANTHER" id="PTHR11349">
    <property type="entry name" value="NUCLEOSIDE DIPHOSPHATE KINASE"/>
    <property type="match status" value="1"/>
</dbReference>
<dbReference type="Pfam" id="PF00334">
    <property type="entry name" value="NDK"/>
    <property type="match status" value="1"/>
</dbReference>
<dbReference type="PRINTS" id="PR01243">
    <property type="entry name" value="NUCDPKINASE"/>
</dbReference>
<dbReference type="SMART" id="SM00562">
    <property type="entry name" value="NDK"/>
    <property type="match status" value="1"/>
</dbReference>
<dbReference type="SUPFAM" id="SSF54919">
    <property type="entry name" value="Nucleoside diphosphate kinase, NDK"/>
    <property type="match status" value="1"/>
</dbReference>
<dbReference type="PROSITE" id="PS00469">
    <property type="entry name" value="NDPK"/>
    <property type="match status" value="1"/>
</dbReference>
<dbReference type="PROSITE" id="PS51374">
    <property type="entry name" value="NDPK_LIKE"/>
    <property type="match status" value="1"/>
</dbReference>
<accession>B4FK49</accession>
<accession>A0A0A7DIX5</accession>
<proteinExistence type="evidence at protein level"/>
<feature type="chain" id="PRO_0000445391" description="Nucleoside diphosphate kinase 1">
    <location>
        <begin position="1"/>
        <end position="149"/>
    </location>
</feature>
<feature type="active site" description="Pros-phosphohistidine intermediate" evidence="3 6">
    <location>
        <position position="115"/>
    </location>
</feature>
<feature type="binding site" evidence="1">
    <location>
        <position position="9"/>
    </location>
    <ligand>
        <name>ATP</name>
        <dbReference type="ChEBI" id="CHEBI:30616"/>
    </ligand>
</feature>
<feature type="binding site" evidence="1">
    <location>
        <position position="57"/>
    </location>
    <ligand>
        <name>ATP</name>
        <dbReference type="ChEBI" id="CHEBI:30616"/>
    </ligand>
</feature>
<feature type="binding site" evidence="1">
    <location>
        <position position="85"/>
    </location>
    <ligand>
        <name>ATP</name>
        <dbReference type="ChEBI" id="CHEBI:30616"/>
    </ligand>
</feature>
<feature type="binding site" evidence="1">
    <location>
        <position position="91"/>
    </location>
    <ligand>
        <name>ATP</name>
        <dbReference type="ChEBI" id="CHEBI:30616"/>
    </ligand>
</feature>
<feature type="binding site" evidence="1">
    <location>
        <position position="102"/>
    </location>
    <ligand>
        <name>ATP</name>
        <dbReference type="ChEBI" id="CHEBI:30616"/>
    </ligand>
</feature>
<feature type="binding site" evidence="1">
    <location>
        <position position="112"/>
    </location>
    <ligand>
        <name>ATP</name>
        <dbReference type="ChEBI" id="CHEBI:30616"/>
    </ligand>
</feature>
<feature type="mutagenesis site" description="Loss of kinase activity. No effect on binding to prefolded G-quadruplex (G4) DNA or to unfolded G4 DNA." evidence="6">
    <original>H</original>
    <variation>A</variation>
    <location>
        <position position="115"/>
    </location>
</feature>
<feature type="mutagenesis site" description="No effect on kinase activity. 5-fold reduction in binding to prefolded G-quadruplex (G4) DNA. Loss fo binding to unfolded G4 DNA." evidence="6">
    <original>K</original>
    <variation>A</variation>
    <location>
        <position position="149"/>
    </location>
</feature>
<feature type="sequence conflict" description="In Ref. 1; AIL33795." evidence="8" ref="1">
    <original>P</original>
    <variation>L</variation>
    <location>
        <position position="135"/>
    </location>
</feature>
<feature type="strand" evidence="13">
    <location>
        <begin position="3"/>
        <end position="8"/>
    </location>
</feature>
<feature type="helix" evidence="13">
    <location>
        <begin position="10"/>
        <end position="14"/>
    </location>
</feature>
<feature type="helix" evidence="13">
    <location>
        <begin position="18"/>
        <end position="28"/>
    </location>
</feature>
<feature type="strand" evidence="13">
    <location>
        <begin position="31"/>
        <end position="39"/>
    </location>
</feature>
<feature type="helix" evidence="13">
    <location>
        <begin position="42"/>
        <end position="48"/>
    </location>
</feature>
<feature type="helix" evidence="13">
    <location>
        <begin position="50"/>
        <end position="52"/>
    </location>
</feature>
<feature type="helix" evidence="13">
    <location>
        <begin position="58"/>
        <end position="65"/>
    </location>
</feature>
<feature type="strand" evidence="13">
    <location>
        <begin position="67"/>
        <end position="77"/>
    </location>
</feature>
<feature type="helix" evidence="13">
    <location>
        <begin position="80"/>
        <end position="88"/>
    </location>
</feature>
<feature type="turn" evidence="13">
    <location>
        <begin position="93"/>
        <end position="95"/>
    </location>
</feature>
<feature type="helix" evidence="13">
    <location>
        <begin position="101"/>
        <end position="105"/>
    </location>
</feature>
<feature type="strand" evidence="13">
    <location>
        <begin position="114"/>
        <end position="116"/>
    </location>
</feature>
<feature type="helix" evidence="13">
    <location>
        <begin position="120"/>
        <end position="130"/>
    </location>
</feature>
<feature type="helix" evidence="13">
    <location>
        <begin position="143"/>
        <end position="146"/>
    </location>
</feature>
<evidence type="ECO:0000250" key="1">
    <source>
        <dbReference type="UniProtKB" id="P22392"/>
    </source>
</evidence>
<evidence type="ECO:0000250" key="2">
    <source>
        <dbReference type="UniProtKB" id="P36010"/>
    </source>
</evidence>
<evidence type="ECO:0000255" key="3">
    <source>
        <dbReference type="PROSITE-ProRule" id="PRU10030"/>
    </source>
</evidence>
<evidence type="ECO:0000255" key="4">
    <source>
        <dbReference type="RuleBase" id="RU004011"/>
    </source>
</evidence>
<evidence type="ECO:0000255" key="5">
    <source>
        <dbReference type="RuleBase" id="RU004013"/>
    </source>
</evidence>
<evidence type="ECO:0000269" key="6">
    <source>
    </source>
</evidence>
<evidence type="ECO:0000303" key="7">
    <source>
    </source>
</evidence>
<evidence type="ECO:0000305" key="8"/>
<evidence type="ECO:0000312" key="9">
    <source>
        <dbReference type="EMBL" id="ACF82492.1"/>
    </source>
</evidence>
<evidence type="ECO:0000312" key="10">
    <source>
        <dbReference type="EMBL" id="AIL33795.1"/>
    </source>
</evidence>
<evidence type="ECO:0000312" key="11">
    <source>
        <dbReference type="EMBL" id="ONL99892.1"/>
    </source>
</evidence>
<evidence type="ECO:0007744" key="12">
    <source>
        <dbReference type="PDB" id="1VYA"/>
    </source>
</evidence>
<evidence type="ECO:0007829" key="13">
    <source>
        <dbReference type="PDB" id="1VYA"/>
    </source>
</evidence>
<gene>
    <name evidence="7" type="primary">ndpk1</name>
    <name evidence="11" type="ORF">ZEAMMB73_Zm00001d029968</name>
</gene>
<reference evidence="10 12" key="1">
    <citation type="journal article" date="2015" name="Biochemistry">
        <title>The maize (Zea mays L.) nucleoside diphosphate kinase1 (ZmNDPK1) gene encodes a human NM23-H2 homologue that binds and stabilizes G-quadruplex DNA.</title>
        <authorList>
            <person name="Kopylov M."/>
            <person name="Bass H.W."/>
            <person name="Stroupe M.E."/>
        </authorList>
    </citation>
    <scope>NUCLEOTIDE SEQUENCE [MRNA]</scope>
    <scope>X-RAY CRYSTALLOGRAPHY (2.05 ANGSTROMS)</scope>
    <scope>FUNCTION</scope>
    <scope>CATALYTIC ACTIVITY</scope>
    <scope>SUBUNIT</scope>
    <scope>ACTIVE SITE</scope>
    <scope>MUTAGENESIS OF HIS-115 AND LYS-149</scope>
    <source>
        <strain evidence="7">W23</strain>
        <tissue evidence="10">Tassel</tissue>
    </source>
</reference>
<reference key="2">
    <citation type="journal article" date="2009" name="Science">
        <title>The B73 maize genome: complexity, diversity, and dynamics.</title>
        <authorList>
            <person name="Schnable P.S."/>
            <person name="Ware D."/>
            <person name="Fulton R.S."/>
            <person name="Stein J.C."/>
            <person name="Wei F."/>
            <person name="Pasternak S."/>
            <person name="Liang C."/>
            <person name="Zhang J."/>
            <person name="Fulton L."/>
            <person name="Graves T.A."/>
            <person name="Minx P."/>
            <person name="Reily A.D."/>
            <person name="Courtney L."/>
            <person name="Kruchowski S.S."/>
            <person name="Tomlinson C."/>
            <person name="Strong C."/>
            <person name="Delehaunty K."/>
            <person name="Fronick C."/>
            <person name="Courtney B."/>
            <person name="Rock S.M."/>
            <person name="Belter E."/>
            <person name="Du F."/>
            <person name="Kim K."/>
            <person name="Abbott R.M."/>
            <person name="Cotton M."/>
            <person name="Levy A."/>
            <person name="Marchetto P."/>
            <person name="Ochoa K."/>
            <person name="Jackson S.M."/>
            <person name="Gillam B."/>
            <person name="Chen W."/>
            <person name="Yan L."/>
            <person name="Higginbotham J."/>
            <person name="Cardenas M."/>
            <person name="Waligorski J."/>
            <person name="Applebaum E."/>
            <person name="Phelps L."/>
            <person name="Falcone J."/>
            <person name="Kanchi K."/>
            <person name="Thane T."/>
            <person name="Scimone A."/>
            <person name="Thane N."/>
            <person name="Henke J."/>
            <person name="Wang T."/>
            <person name="Ruppert J."/>
            <person name="Shah N."/>
            <person name="Rotter K."/>
            <person name="Hodges J."/>
            <person name="Ingenthron E."/>
            <person name="Cordes M."/>
            <person name="Kohlberg S."/>
            <person name="Sgro J."/>
            <person name="Delgado B."/>
            <person name="Mead K."/>
            <person name="Chinwalla A."/>
            <person name="Leonard S."/>
            <person name="Crouse K."/>
            <person name="Collura K."/>
            <person name="Kudrna D."/>
            <person name="Currie J."/>
            <person name="He R."/>
            <person name="Angelova A."/>
            <person name="Rajasekar S."/>
            <person name="Mueller T."/>
            <person name="Lomeli R."/>
            <person name="Scara G."/>
            <person name="Ko A."/>
            <person name="Delaney K."/>
            <person name="Wissotski M."/>
            <person name="Lopez G."/>
            <person name="Campos D."/>
            <person name="Braidotti M."/>
            <person name="Ashley E."/>
            <person name="Golser W."/>
            <person name="Kim H."/>
            <person name="Lee S."/>
            <person name="Lin J."/>
            <person name="Dujmic Z."/>
            <person name="Kim W."/>
            <person name="Talag J."/>
            <person name="Zuccolo A."/>
            <person name="Fan C."/>
            <person name="Sebastian A."/>
            <person name="Kramer M."/>
            <person name="Spiegel L."/>
            <person name="Nascimento L."/>
            <person name="Zutavern T."/>
            <person name="Miller B."/>
            <person name="Ambroise C."/>
            <person name="Muller S."/>
            <person name="Spooner W."/>
            <person name="Narechania A."/>
            <person name="Ren L."/>
            <person name="Wei S."/>
            <person name="Kumari S."/>
            <person name="Faga B."/>
            <person name="Levy M.J."/>
            <person name="McMahan L."/>
            <person name="Van Buren P."/>
            <person name="Vaughn M.W."/>
            <person name="Ying K."/>
            <person name="Yeh C.-T."/>
            <person name="Emrich S.J."/>
            <person name="Jia Y."/>
            <person name="Kalyanaraman A."/>
            <person name="Hsia A.-P."/>
            <person name="Barbazuk W.B."/>
            <person name="Baucom R.S."/>
            <person name="Brutnell T.P."/>
            <person name="Carpita N.C."/>
            <person name="Chaparro C."/>
            <person name="Chia J.-M."/>
            <person name="Deragon J.-M."/>
            <person name="Estill J.C."/>
            <person name="Fu Y."/>
            <person name="Jeddeloh J.A."/>
            <person name="Han Y."/>
            <person name="Lee H."/>
            <person name="Li P."/>
            <person name="Lisch D.R."/>
            <person name="Liu S."/>
            <person name="Liu Z."/>
            <person name="Nagel D.H."/>
            <person name="McCann M.C."/>
            <person name="SanMiguel P."/>
            <person name="Myers A.M."/>
            <person name="Nettleton D."/>
            <person name="Nguyen J."/>
            <person name="Penning B.W."/>
            <person name="Ponnala L."/>
            <person name="Schneider K.L."/>
            <person name="Schwartz D.C."/>
            <person name="Sharma A."/>
            <person name="Soderlund C."/>
            <person name="Springer N.M."/>
            <person name="Sun Q."/>
            <person name="Wang H."/>
            <person name="Waterman M."/>
            <person name="Westerman R."/>
            <person name="Wolfgruber T.K."/>
            <person name="Yang L."/>
            <person name="Yu Y."/>
            <person name="Zhang L."/>
            <person name="Zhou S."/>
            <person name="Zhu Q."/>
            <person name="Bennetzen J.L."/>
            <person name="Dawe R.K."/>
            <person name="Jiang J."/>
            <person name="Jiang N."/>
            <person name="Presting G.G."/>
            <person name="Wessler S.R."/>
            <person name="Aluru S."/>
            <person name="Martienssen R.A."/>
            <person name="Clifton S.W."/>
            <person name="McCombie W.R."/>
            <person name="Wing R.A."/>
            <person name="Wilson R.K."/>
        </authorList>
    </citation>
    <scope>NUCLEOTIDE SEQUENCE [LARGE SCALE GENOMIC DNA]</scope>
    <source>
        <strain>cv. B73</strain>
        <tissue evidence="11">Seedling</tissue>
    </source>
</reference>
<reference key="3">
    <citation type="journal article" date="2009" name="Plant Mol. Biol.">
        <title>Insights into corn genes derived from large-scale cDNA sequencing.</title>
        <authorList>
            <person name="Alexandrov N.N."/>
            <person name="Brover V.V."/>
            <person name="Freidin S."/>
            <person name="Troukhan M.E."/>
            <person name="Tatarinova T.V."/>
            <person name="Zhang H."/>
            <person name="Swaller T.J."/>
            <person name="Lu Y.-P."/>
            <person name="Bouck J."/>
            <person name="Flavell R.B."/>
            <person name="Feldmann K.A."/>
        </authorList>
    </citation>
    <scope>NUCLEOTIDE SEQUENCE [LARGE SCALE MRNA]</scope>
</reference>
<reference key="4">
    <citation type="journal article" date="2009" name="PLoS Genet.">
        <title>Sequencing, mapping, and analysis of 27,455 maize full-length cDNAs.</title>
        <authorList>
            <person name="Soderlund C."/>
            <person name="Descour A."/>
            <person name="Kudrna D."/>
            <person name="Bomhoff M."/>
            <person name="Boyd L."/>
            <person name="Currie J."/>
            <person name="Angelova A."/>
            <person name="Collura K."/>
            <person name="Wissotski M."/>
            <person name="Ashley E."/>
            <person name="Morrow D."/>
            <person name="Fernandes J."/>
            <person name="Walbot V."/>
            <person name="Yu Y."/>
        </authorList>
    </citation>
    <scope>NUCLEOTIDE SEQUENCE [LARGE SCALE MRNA]</scope>
    <source>
        <strain evidence="9">cv. B73</strain>
    </source>
</reference>
<sequence>MESTFIMIKPDGVQRGLIGEIISRFEKKGFYLKALKLVNVERSFAEKHYADLASKPFFQGLVDYIISGPVVAMVWEGKSVVTTGRKIIGATNPLASEPGTIRGDFAVDIGRNVIHGSDSIESANKEIALWFPEGPADWQSSQHPWIYEK</sequence>
<comment type="function">
    <text evidence="2 6 8">Major role in the synthesis of nucleoside triphosphates other than ATP. The ATP gamma phosphate is transferred to the NDP beta phosphate via a ping-pong mechanism, using a phosphorylated active-site intermediate (By similarity). Involved in transcription regulation (Probable). Has G-quadruplex (G4) DNA-binding activity, which is independent of its nucleotide-binding and kinase activity. Binds folded G4 with low nanomolar affinity and corresponding unfolded G-rich DNA more weakly. Stabilizes folded G4s regardless of whether they are prefolded or not (PubMed:25679041).</text>
</comment>
<comment type="catalytic activity">
    <reaction evidence="5 6">
        <text>a 2'-deoxyribonucleoside 5'-diphosphate + ATP = a 2'-deoxyribonucleoside 5'-triphosphate + ADP</text>
        <dbReference type="Rhea" id="RHEA:44640"/>
        <dbReference type="ChEBI" id="CHEBI:30616"/>
        <dbReference type="ChEBI" id="CHEBI:61560"/>
        <dbReference type="ChEBI" id="CHEBI:73316"/>
        <dbReference type="ChEBI" id="CHEBI:456216"/>
        <dbReference type="EC" id="2.7.4.6"/>
    </reaction>
</comment>
<comment type="catalytic activity">
    <reaction evidence="5 6">
        <text>a ribonucleoside 5'-diphosphate + ATP = a ribonucleoside 5'-triphosphate + ADP</text>
        <dbReference type="Rhea" id="RHEA:18113"/>
        <dbReference type="ChEBI" id="CHEBI:30616"/>
        <dbReference type="ChEBI" id="CHEBI:57930"/>
        <dbReference type="ChEBI" id="CHEBI:61557"/>
        <dbReference type="ChEBI" id="CHEBI:456216"/>
        <dbReference type="EC" id="2.7.4.6"/>
    </reaction>
</comment>
<comment type="cofactor">
    <cofactor evidence="1">
        <name>Mg(2+)</name>
        <dbReference type="ChEBI" id="CHEBI:18420"/>
    </cofactor>
</comment>
<comment type="subunit">
    <text evidence="6">Homohexamer. Can also form dodecamers.</text>
</comment>
<comment type="subcellular location">
    <subcellularLocation>
        <location evidence="8">Nucleus</location>
    </subcellularLocation>
</comment>
<comment type="similarity">
    <text evidence="4 8">Belongs to the NDK family.</text>
</comment>